<organism>
    <name type="scientific">Dioscorea elephantipes</name>
    <name type="common">Elephant's foot yam</name>
    <name type="synonym">Testudinaria elephantipes</name>
    <dbReference type="NCBI Taxonomy" id="145284"/>
    <lineage>
        <taxon>Eukaryota</taxon>
        <taxon>Viridiplantae</taxon>
        <taxon>Streptophyta</taxon>
        <taxon>Embryophyta</taxon>
        <taxon>Tracheophyta</taxon>
        <taxon>Spermatophyta</taxon>
        <taxon>Magnoliopsida</taxon>
        <taxon>Liliopsida</taxon>
        <taxon>Dioscoreales</taxon>
        <taxon>Dioscoreaceae</taxon>
        <taxon>Dioscorea</taxon>
    </lineage>
</organism>
<evidence type="ECO:0000250" key="1"/>
<evidence type="ECO:0000305" key="2"/>
<sequence length="201" mass="23381">MSRYRGPRFKKIRRLGALPGLTSKRPRSGSDFKNQSRFGKKSQYRIRLEEKQKLRFHYGLTEQQLLRYVHIAGKAKGSTDQVLLQLLEMRLDNILFRLGMASTIPAARQLVNHRHILVNGRIVDIPSYRCKPRDIITSKDKQRSKVLIQNSIESSPHEELPKHLTIDSFQYKGLVNQIIDSKLIGLKINELLVVEYYSRQT</sequence>
<name>RR4_DIOEL</name>
<accession>A6MMK9</accession>
<gene>
    <name type="primary">rps4</name>
</gene>
<reference key="1">
    <citation type="journal article" date="2007" name="Mol. Phylogenet. Evol.">
        <title>Phylogenetic and evolutionary implications of complete chloroplast genome sequences of four early-diverging angiosperms: Buxus (Buxaceae), Chloranthus (Chloranthaceae), Dioscorea (Dioscoreaceae), and Illicium (Schisandraceae).</title>
        <authorList>
            <person name="Hansen D.R."/>
            <person name="Dastidar S.G."/>
            <person name="Cai Z."/>
            <person name="Penaflor C."/>
            <person name="Kuehl J.V."/>
            <person name="Boore J.L."/>
            <person name="Jansen R.K."/>
        </authorList>
    </citation>
    <scope>NUCLEOTIDE SEQUENCE [LARGE SCALE GENOMIC DNA]</scope>
</reference>
<comment type="function">
    <text evidence="1">One of the primary rRNA binding proteins, it binds directly to 16S rRNA where it nucleates assembly of the body of the 30S subunit.</text>
</comment>
<comment type="function">
    <text evidence="1">With S5 and S12 plays an important role in translational accuracy.</text>
</comment>
<comment type="subunit">
    <text evidence="1">Part of the 30S ribosomal subunit. Contacts protein S5. The interaction surface between S4 and S5 is involved in control of translational fidelity (By similarity).</text>
</comment>
<comment type="subcellular location">
    <subcellularLocation>
        <location>Plastid</location>
        <location>Chloroplast</location>
    </subcellularLocation>
</comment>
<comment type="similarity">
    <text evidence="2">Belongs to the universal ribosomal protein uS4 family.</text>
</comment>
<proteinExistence type="inferred from homology"/>
<keyword id="KW-0150">Chloroplast</keyword>
<keyword id="KW-0934">Plastid</keyword>
<keyword id="KW-0687">Ribonucleoprotein</keyword>
<keyword id="KW-0689">Ribosomal protein</keyword>
<keyword id="KW-0694">RNA-binding</keyword>
<keyword id="KW-0699">rRNA-binding</keyword>
<protein>
    <recommendedName>
        <fullName evidence="2">Small ribosomal subunit protein uS4c</fullName>
    </recommendedName>
    <alternativeName>
        <fullName>30S ribosomal protein S4, chloroplastic</fullName>
    </alternativeName>
</protein>
<feature type="chain" id="PRO_0000322370" description="Small ribosomal subunit protein uS4c">
    <location>
        <begin position="1"/>
        <end position="201"/>
    </location>
</feature>
<feature type="domain" description="S4 RNA-binding">
    <location>
        <begin position="89"/>
        <end position="150"/>
    </location>
</feature>
<geneLocation type="chloroplast"/>
<dbReference type="EMBL" id="EF380353">
    <property type="protein sequence ID" value="ABR01432.1"/>
    <property type="molecule type" value="Genomic_DNA"/>
</dbReference>
<dbReference type="RefSeq" id="YP_001294354.1">
    <property type="nucleotide sequence ID" value="NC_009601.1"/>
</dbReference>
<dbReference type="SMR" id="A6MMK9"/>
<dbReference type="GeneID" id="5236597"/>
<dbReference type="GO" id="GO:0009507">
    <property type="term" value="C:chloroplast"/>
    <property type="evidence" value="ECO:0007669"/>
    <property type="project" value="UniProtKB-SubCell"/>
</dbReference>
<dbReference type="GO" id="GO:0015935">
    <property type="term" value="C:small ribosomal subunit"/>
    <property type="evidence" value="ECO:0007669"/>
    <property type="project" value="InterPro"/>
</dbReference>
<dbReference type="GO" id="GO:0019843">
    <property type="term" value="F:rRNA binding"/>
    <property type="evidence" value="ECO:0007669"/>
    <property type="project" value="UniProtKB-UniRule"/>
</dbReference>
<dbReference type="GO" id="GO:0003735">
    <property type="term" value="F:structural constituent of ribosome"/>
    <property type="evidence" value="ECO:0007669"/>
    <property type="project" value="InterPro"/>
</dbReference>
<dbReference type="GO" id="GO:0042274">
    <property type="term" value="P:ribosomal small subunit biogenesis"/>
    <property type="evidence" value="ECO:0007669"/>
    <property type="project" value="TreeGrafter"/>
</dbReference>
<dbReference type="GO" id="GO:0006412">
    <property type="term" value="P:translation"/>
    <property type="evidence" value="ECO:0007669"/>
    <property type="project" value="UniProtKB-UniRule"/>
</dbReference>
<dbReference type="CDD" id="cd00165">
    <property type="entry name" value="S4"/>
    <property type="match status" value="1"/>
</dbReference>
<dbReference type="FunFam" id="1.10.1050.10:FF:000002">
    <property type="entry name" value="30S ribosomal protein S4, chloroplastic"/>
    <property type="match status" value="1"/>
</dbReference>
<dbReference type="FunFam" id="3.10.290.10:FF:000081">
    <property type="entry name" value="30S ribosomal protein S4, chloroplastic"/>
    <property type="match status" value="1"/>
</dbReference>
<dbReference type="Gene3D" id="1.10.1050.10">
    <property type="entry name" value="Ribosomal Protein S4 Delta 41, Chain A, domain 1"/>
    <property type="match status" value="1"/>
</dbReference>
<dbReference type="Gene3D" id="3.10.290.10">
    <property type="entry name" value="RNA-binding S4 domain"/>
    <property type="match status" value="1"/>
</dbReference>
<dbReference type="HAMAP" id="MF_01306_B">
    <property type="entry name" value="Ribosomal_uS4_B"/>
    <property type="match status" value="1"/>
</dbReference>
<dbReference type="InterPro" id="IPR022801">
    <property type="entry name" value="Ribosomal_uS4"/>
</dbReference>
<dbReference type="InterPro" id="IPR005709">
    <property type="entry name" value="Ribosomal_uS4_bac-type"/>
</dbReference>
<dbReference type="InterPro" id="IPR018079">
    <property type="entry name" value="Ribosomal_uS4_CS"/>
</dbReference>
<dbReference type="InterPro" id="IPR001912">
    <property type="entry name" value="Ribosomal_uS4_N"/>
</dbReference>
<dbReference type="InterPro" id="IPR002942">
    <property type="entry name" value="S4_RNA-bd"/>
</dbReference>
<dbReference type="InterPro" id="IPR036986">
    <property type="entry name" value="S4_RNA-bd_sf"/>
</dbReference>
<dbReference type="NCBIfam" id="NF003717">
    <property type="entry name" value="PRK05327.1"/>
    <property type="match status" value="1"/>
</dbReference>
<dbReference type="NCBIfam" id="TIGR01017">
    <property type="entry name" value="rpsD_bact"/>
    <property type="match status" value="1"/>
</dbReference>
<dbReference type="PANTHER" id="PTHR11831">
    <property type="entry name" value="30S 40S RIBOSOMAL PROTEIN"/>
    <property type="match status" value="1"/>
</dbReference>
<dbReference type="PANTHER" id="PTHR11831:SF4">
    <property type="entry name" value="SMALL RIBOSOMAL SUBUNIT PROTEIN US4M"/>
    <property type="match status" value="1"/>
</dbReference>
<dbReference type="Pfam" id="PF00163">
    <property type="entry name" value="Ribosomal_S4"/>
    <property type="match status" value="1"/>
</dbReference>
<dbReference type="Pfam" id="PF01479">
    <property type="entry name" value="S4"/>
    <property type="match status" value="1"/>
</dbReference>
<dbReference type="SMART" id="SM01390">
    <property type="entry name" value="Ribosomal_S4"/>
    <property type="match status" value="1"/>
</dbReference>
<dbReference type="SMART" id="SM00363">
    <property type="entry name" value="S4"/>
    <property type="match status" value="1"/>
</dbReference>
<dbReference type="SUPFAM" id="SSF55174">
    <property type="entry name" value="Alpha-L RNA-binding motif"/>
    <property type="match status" value="1"/>
</dbReference>
<dbReference type="PROSITE" id="PS00632">
    <property type="entry name" value="RIBOSOMAL_S4"/>
    <property type="match status" value="1"/>
</dbReference>
<dbReference type="PROSITE" id="PS50889">
    <property type="entry name" value="S4"/>
    <property type="match status" value="1"/>
</dbReference>